<keyword id="KW-0012">Acyltransferase</keyword>
<keyword id="KW-0963">Cytoplasm</keyword>
<keyword id="KW-0808">Transferase</keyword>
<organism>
    <name type="scientific">Xanthomonas euvesicatoria pv. vesicatoria (strain 85-10)</name>
    <name type="common">Xanthomonas campestris pv. vesicatoria</name>
    <dbReference type="NCBI Taxonomy" id="316273"/>
    <lineage>
        <taxon>Bacteria</taxon>
        <taxon>Pseudomonadati</taxon>
        <taxon>Pseudomonadota</taxon>
        <taxon>Gammaproteobacteria</taxon>
        <taxon>Lysobacterales</taxon>
        <taxon>Lysobacteraceae</taxon>
        <taxon>Xanthomonas</taxon>
    </lineage>
</organism>
<reference key="1">
    <citation type="journal article" date="2005" name="J. Bacteriol.">
        <title>Insights into genome plasticity and pathogenicity of the plant pathogenic Bacterium Xanthomonas campestris pv. vesicatoria revealed by the complete genome sequence.</title>
        <authorList>
            <person name="Thieme F."/>
            <person name="Koebnik R."/>
            <person name="Bekel T."/>
            <person name="Berger C."/>
            <person name="Boch J."/>
            <person name="Buettner D."/>
            <person name="Caldana C."/>
            <person name="Gaigalat L."/>
            <person name="Goesmann A."/>
            <person name="Kay S."/>
            <person name="Kirchner O."/>
            <person name="Lanz C."/>
            <person name="Linke B."/>
            <person name="McHardy A.C."/>
            <person name="Meyer F."/>
            <person name="Mittenhuber G."/>
            <person name="Nies D.H."/>
            <person name="Niesbach-Kloesgen U."/>
            <person name="Patschkowski T."/>
            <person name="Rueckert C."/>
            <person name="Rupp O."/>
            <person name="Schneiker S."/>
            <person name="Schuster S.C."/>
            <person name="Vorhoelter F.J."/>
            <person name="Weber E."/>
            <person name="Puehler A."/>
            <person name="Bonas U."/>
            <person name="Bartels D."/>
            <person name="Kaiser O."/>
        </authorList>
    </citation>
    <scope>NUCLEOTIDE SEQUENCE [LARGE SCALE GENOMIC DNA]</scope>
    <source>
        <strain>85-10</strain>
    </source>
</reference>
<proteinExistence type="inferred from homology"/>
<dbReference type="EC" id="2.3.1.181" evidence="1"/>
<dbReference type="EMBL" id="AM039952">
    <property type="protein sequence ID" value="CAJ22359.1"/>
    <property type="molecule type" value="Genomic_DNA"/>
</dbReference>
<dbReference type="RefSeq" id="WP_011346343.1">
    <property type="nucleotide sequence ID" value="NZ_CP017190.1"/>
</dbReference>
<dbReference type="SMR" id="Q3BXQ4"/>
<dbReference type="STRING" id="456327.BJD11_19180"/>
<dbReference type="KEGG" id="xcv:XCV0728"/>
<dbReference type="eggNOG" id="COG0321">
    <property type="taxonomic scope" value="Bacteria"/>
</dbReference>
<dbReference type="HOGENOM" id="CLU_035168_3_1_6"/>
<dbReference type="UniPathway" id="UPA00538">
    <property type="reaction ID" value="UER00592"/>
</dbReference>
<dbReference type="Proteomes" id="UP000007069">
    <property type="component" value="Chromosome"/>
</dbReference>
<dbReference type="GO" id="GO:0005737">
    <property type="term" value="C:cytoplasm"/>
    <property type="evidence" value="ECO:0007669"/>
    <property type="project" value="UniProtKB-SubCell"/>
</dbReference>
<dbReference type="GO" id="GO:0033819">
    <property type="term" value="F:lipoyl(octanoyl) transferase activity"/>
    <property type="evidence" value="ECO:0007669"/>
    <property type="project" value="UniProtKB-EC"/>
</dbReference>
<dbReference type="GO" id="GO:0036211">
    <property type="term" value="P:protein modification process"/>
    <property type="evidence" value="ECO:0007669"/>
    <property type="project" value="InterPro"/>
</dbReference>
<dbReference type="CDD" id="cd16444">
    <property type="entry name" value="LipB"/>
    <property type="match status" value="1"/>
</dbReference>
<dbReference type="FunFam" id="3.30.930.10:FF:000020">
    <property type="entry name" value="Octanoyltransferase"/>
    <property type="match status" value="1"/>
</dbReference>
<dbReference type="Gene3D" id="3.30.930.10">
    <property type="entry name" value="Bira Bifunctional Protein, Domain 2"/>
    <property type="match status" value="1"/>
</dbReference>
<dbReference type="HAMAP" id="MF_00013">
    <property type="entry name" value="LipB"/>
    <property type="match status" value="1"/>
</dbReference>
<dbReference type="InterPro" id="IPR045864">
    <property type="entry name" value="aa-tRNA-synth_II/BPL/LPL"/>
</dbReference>
<dbReference type="InterPro" id="IPR004143">
    <property type="entry name" value="BPL_LPL_catalytic"/>
</dbReference>
<dbReference type="InterPro" id="IPR000544">
    <property type="entry name" value="Octanoyltransferase"/>
</dbReference>
<dbReference type="InterPro" id="IPR020605">
    <property type="entry name" value="Octanoyltransferase_CS"/>
</dbReference>
<dbReference type="NCBIfam" id="TIGR00214">
    <property type="entry name" value="lipB"/>
    <property type="match status" value="1"/>
</dbReference>
<dbReference type="NCBIfam" id="NF010922">
    <property type="entry name" value="PRK14342.1"/>
    <property type="match status" value="1"/>
</dbReference>
<dbReference type="NCBIfam" id="NF010925">
    <property type="entry name" value="PRK14345.1"/>
    <property type="match status" value="1"/>
</dbReference>
<dbReference type="PANTHER" id="PTHR10993:SF7">
    <property type="entry name" value="LIPOYLTRANSFERASE 2, MITOCHONDRIAL-RELATED"/>
    <property type="match status" value="1"/>
</dbReference>
<dbReference type="PANTHER" id="PTHR10993">
    <property type="entry name" value="OCTANOYLTRANSFERASE"/>
    <property type="match status" value="1"/>
</dbReference>
<dbReference type="Pfam" id="PF21948">
    <property type="entry name" value="LplA-B_cat"/>
    <property type="match status" value="1"/>
</dbReference>
<dbReference type="PIRSF" id="PIRSF016262">
    <property type="entry name" value="LPLase"/>
    <property type="match status" value="1"/>
</dbReference>
<dbReference type="SUPFAM" id="SSF55681">
    <property type="entry name" value="Class II aaRS and biotin synthetases"/>
    <property type="match status" value="1"/>
</dbReference>
<dbReference type="PROSITE" id="PS51733">
    <property type="entry name" value="BPL_LPL_CATALYTIC"/>
    <property type="match status" value="1"/>
</dbReference>
<dbReference type="PROSITE" id="PS01313">
    <property type="entry name" value="LIPB"/>
    <property type="match status" value="1"/>
</dbReference>
<accession>Q3BXQ4</accession>
<protein>
    <recommendedName>
        <fullName evidence="1">Octanoyltransferase</fullName>
        <ecNumber evidence="1">2.3.1.181</ecNumber>
    </recommendedName>
    <alternativeName>
        <fullName evidence="1">Lipoate-protein ligase B</fullName>
    </alternativeName>
    <alternativeName>
        <fullName evidence="1">Lipoyl/octanoyl transferase</fullName>
    </alternativeName>
    <alternativeName>
        <fullName evidence="1">Octanoyl-[acyl-carrier-protein]-protein N-octanoyltransferase</fullName>
    </alternativeName>
</protein>
<sequence length="232" mass="25036">MDAVAAEPVSSSTAGLPAQLRDLGQQNYAPVWRAMQRFTDARGEHTADEVWVVEHAPVFTLGQAGKPEHVLAPGEIPVLQVDRGGQVTYHGPGQLVVYPLLDLRRLKIGVRDYVCKIEQALIDTLEEWNIVAERRDGAPGVYVGGAKIAALGIRVRRGCTFHGLSFNVAMDLEPFHRINPCGYQGLQVTSVLDLGGPSGMDAVKAVLLDQLARQFGLVLQPTSALPDLSLPA</sequence>
<comment type="function">
    <text evidence="1">Catalyzes the transfer of endogenously produced octanoic acid from octanoyl-acyl-carrier-protein onto the lipoyl domains of lipoate-dependent enzymes. Lipoyl-ACP can also act as a substrate although octanoyl-ACP is likely to be the physiological substrate.</text>
</comment>
<comment type="catalytic activity">
    <reaction evidence="1">
        <text>octanoyl-[ACP] + L-lysyl-[protein] = N(6)-octanoyl-L-lysyl-[protein] + holo-[ACP] + H(+)</text>
        <dbReference type="Rhea" id="RHEA:17665"/>
        <dbReference type="Rhea" id="RHEA-COMP:9636"/>
        <dbReference type="Rhea" id="RHEA-COMP:9685"/>
        <dbReference type="Rhea" id="RHEA-COMP:9752"/>
        <dbReference type="Rhea" id="RHEA-COMP:9928"/>
        <dbReference type="ChEBI" id="CHEBI:15378"/>
        <dbReference type="ChEBI" id="CHEBI:29969"/>
        <dbReference type="ChEBI" id="CHEBI:64479"/>
        <dbReference type="ChEBI" id="CHEBI:78463"/>
        <dbReference type="ChEBI" id="CHEBI:78809"/>
        <dbReference type="EC" id="2.3.1.181"/>
    </reaction>
</comment>
<comment type="pathway">
    <text evidence="1">Protein modification; protein lipoylation via endogenous pathway; protein N(6)-(lipoyl)lysine from octanoyl-[acyl-carrier-protein]: step 1/2.</text>
</comment>
<comment type="subcellular location">
    <subcellularLocation>
        <location evidence="1">Cytoplasm</location>
    </subcellularLocation>
</comment>
<comment type="miscellaneous">
    <text evidence="1">In the reaction, the free carboxyl group of octanoic acid is attached via an amide linkage to the epsilon-amino group of a specific lysine residue of lipoyl domains of lipoate-dependent enzymes.</text>
</comment>
<comment type="similarity">
    <text evidence="1">Belongs to the LipB family.</text>
</comment>
<feature type="chain" id="PRO_0000242782" description="Octanoyltransferase">
    <location>
        <begin position="1"/>
        <end position="232"/>
    </location>
</feature>
<feature type="domain" description="BPL/LPL catalytic" evidence="2">
    <location>
        <begin position="44"/>
        <end position="219"/>
    </location>
</feature>
<feature type="active site" description="Acyl-thioester intermediate" evidence="1">
    <location>
        <position position="181"/>
    </location>
</feature>
<feature type="binding site" evidence="1">
    <location>
        <begin position="83"/>
        <end position="90"/>
    </location>
    <ligand>
        <name>substrate</name>
    </ligand>
</feature>
<feature type="binding site" evidence="1">
    <location>
        <begin position="150"/>
        <end position="152"/>
    </location>
    <ligand>
        <name>substrate</name>
    </ligand>
</feature>
<feature type="binding site" evidence="1">
    <location>
        <begin position="163"/>
        <end position="165"/>
    </location>
    <ligand>
        <name>substrate</name>
    </ligand>
</feature>
<feature type="site" description="Lowers pKa of active site Cys" evidence="1">
    <location>
        <position position="147"/>
    </location>
</feature>
<name>LIPB_XANE5</name>
<evidence type="ECO:0000255" key="1">
    <source>
        <dbReference type="HAMAP-Rule" id="MF_00013"/>
    </source>
</evidence>
<evidence type="ECO:0000255" key="2">
    <source>
        <dbReference type="PROSITE-ProRule" id="PRU01067"/>
    </source>
</evidence>
<gene>
    <name evidence="1" type="primary">lipB</name>
    <name type="ordered locus">XCV0728</name>
</gene>